<accession>Q9W3F7</accession>
<accession>Q95S64</accession>
<evidence type="ECO:0000255" key="1"/>
<evidence type="ECO:0000256" key="2">
    <source>
        <dbReference type="SAM" id="MobiDB-lite"/>
    </source>
</evidence>
<evidence type="ECO:0000269" key="3">
    <source>
    </source>
</evidence>
<evidence type="ECO:0000303" key="4">
    <source>
    </source>
</evidence>
<evidence type="ECO:0000305" key="5"/>
<evidence type="ECO:0000305" key="6">
    <source>
    </source>
</evidence>
<evidence type="ECO:0000312" key="7">
    <source>
        <dbReference type="FlyBase" id="FBgn0030037"/>
    </source>
</evidence>
<sequence>MQRVMPASWSSGGSLLPFRVSTTTKVVLFSLTAGVALMSVLSRFLRRRKPPRPPRRARKYTGRRNRNSMRSPNDLISIAGSKASARSGSPVGSTLAYSDRLSMASGSIGVGVLGVQNAGPGSSVVTQLTAQQLGMMGMEALDTVINFWEDALAAHYSPGGLPALLTTAEDSEFCREIQNLLEMAYTLQEQSELLFLDQRSVLFREEHSIDEAEEEAGEADDDRRSRKSGSVLSRAGSDPNFDSAESFASALDQVADLREFDGFIETSYEEYPLFQSALKHHDEYTVPCRTIRAELMHCSTDTEYLAKLHCVRLAFQFLFKDPAVGQWICDAGRQILTDLLCLGDKDTKEFLVGYEDMVNYLHDSNNWPCIQMELEQRNVKAMTFYDICLDFIILDSFKDLDAPPASVTAVVQNRWLSNGFKETALTTAVWSVLKAKKRMLKFPNGFMSHFYVISEQISPLMAWGFFGPNENLRDICHYFREELLAFLGDIFSFQKSRFTTIEEFSQDVLQHMQTRVNNIGVKFSQ</sequence>
<protein>
    <recommendedName>
        <fullName evidence="4">Mitoguardin</fullName>
    </recommendedName>
</protein>
<dbReference type="EMBL" id="AE014298">
    <property type="protein sequence ID" value="AAF46370.2"/>
    <property type="molecule type" value="Genomic_DNA"/>
</dbReference>
<dbReference type="EMBL" id="AE014298">
    <property type="protein sequence ID" value="ACZ95237.1"/>
    <property type="molecule type" value="Genomic_DNA"/>
</dbReference>
<dbReference type="EMBL" id="AE014298">
    <property type="protein sequence ID" value="AHN59488.1"/>
    <property type="molecule type" value="Genomic_DNA"/>
</dbReference>
<dbReference type="EMBL" id="AY060938">
    <property type="protein sequence ID" value="AAL28486.1"/>
    <property type="status" value="ALT_FRAME"/>
    <property type="molecule type" value="mRNA"/>
</dbReference>
<dbReference type="EMBL" id="AY113409">
    <property type="protein sequence ID" value="AAM29414.1"/>
    <property type="molecule type" value="mRNA"/>
</dbReference>
<dbReference type="EMBL" id="BT056253">
    <property type="protein sequence ID" value="ACL68700.1"/>
    <property type="molecule type" value="mRNA"/>
</dbReference>
<dbReference type="RefSeq" id="NP_001162702.1">
    <property type="nucleotide sequence ID" value="NM_001169231.2"/>
</dbReference>
<dbReference type="RefSeq" id="NP_001285017.1">
    <property type="nucleotide sequence ID" value="NM_001298088.1"/>
</dbReference>
<dbReference type="RefSeq" id="NP_572476.2">
    <property type="nucleotide sequence ID" value="NM_132248.3"/>
</dbReference>
<dbReference type="SMR" id="Q9W3F7"/>
<dbReference type="FunCoup" id="Q9W3F7">
    <property type="interactions" value="1728"/>
</dbReference>
<dbReference type="IntAct" id="Q9W3F7">
    <property type="interactions" value="1"/>
</dbReference>
<dbReference type="STRING" id="7227.FBpp0311873"/>
<dbReference type="TCDB" id="8.A.167.1.1">
    <property type="family name" value="the mitoguardin (miga) family"/>
</dbReference>
<dbReference type="PaxDb" id="7227-FBpp0071189"/>
<dbReference type="EnsemblMetazoa" id="FBtr0071246">
    <property type="protein sequence ID" value="FBpp0071189"/>
    <property type="gene ID" value="FBgn0030037"/>
</dbReference>
<dbReference type="EnsemblMetazoa" id="FBtr0300383">
    <property type="protein sequence ID" value="FBpp0289612"/>
    <property type="gene ID" value="FBgn0030037"/>
</dbReference>
<dbReference type="EnsemblMetazoa" id="FBtr0345986">
    <property type="protein sequence ID" value="FBpp0311873"/>
    <property type="gene ID" value="FBgn0030037"/>
</dbReference>
<dbReference type="GeneID" id="31775"/>
<dbReference type="KEGG" id="dme:Dmel_CG12125"/>
<dbReference type="UCSC" id="CG12125-RA">
    <property type="organism name" value="d. melanogaster"/>
</dbReference>
<dbReference type="UCSC" id="CG12125-RB">
    <property type="organism name" value="d. melanogaster"/>
</dbReference>
<dbReference type="AGR" id="FB:FBgn0030037"/>
<dbReference type="CTD" id="31775"/>
<dbReference type="FlyBase" id="FBgn0030037">
    <property type="gene designation" value="Miga"/>
</dbReference>
<dbReference type="VEuPathDB" id="VectorBase:FBgn0030037"/>
<dbReference type="eggNOG" id="KOG3831">
    <property type="taxonomic scope" value="Eukaryota"/>
</dbReference>
<dbReference type="GeneTree" id="ENSGT00390000008565"/>
<dbReference type="HOGENOM" id="CLU_031519_0_1_1"/>
<dbReference type="InParanoid" id="Q9W3F7"/>
<dbReference type="OMA" id="AHFYVIS"/>
<dbReference type="OrthoDB" id="8880065at2759"/>
<dbReference type="PhylomeDB" id="Q9W3F7"/>
<dbReference type="Reactome" id="R-DME-1483166">
    <property type="pathway name" value="Synthesis of PA"/>
</dbReference>
<dbReference type="BioGRID-ORCS" id="31775">
    <property type="hits" value="0 hits in 3 CRISPR screens"/>
</dbReference>
<dbReference type="ChiTaRS" id="Miga">
    <property type="organism name" value="fly"/>
</dbReference>
<dbReference type="GenomeRNAi" id="31775"/>
<dbReference type="PRO" id="PR:Q9W3F7"/>
<dbReference type="Proteomes" id="UP000000803">
    <property type="component" value="Chromosome X"/>
</dbReference>
<dbReference type="Bgee" id="FBgn0030037">
    <property type="expression patterns" value="Expressed in adult Malpighian tubule principal cell of lower segment in Malpighian tubule and 134 other cell types or tissues"/>
</dbReference>
<dbReference type="GO" id="GO:0005741">
    <property type="term" value="C:mitochondrial outer membrane"/>
    <property type="evidence" value="ECO:0000315"/>
    <property type="project" value="FlyBase"/>
</dbReference>
<dbReference type="GO" id="GO:0005739">
    <property type="term" value="C:mitochondrion"/>
    <property type="evidence" value="ECO:0000314"/>
    <property type="project" value="UniProtKB"/>
</dbReference>
<dbReference type="GO" id="GO:0141038">
    <property type="term" value="F:phosphatidylinositol 3-kinase activator activity"/>
    <property type="evidence" value="ECO:0000315"/>
    <property type="project" value="FlyBase"/>
</dbReference>
<dbReference type="GO" id="GO:0008053">
    <property type="term" value="P:mitochondrial fusion"/>
    <property type="evidence" value="ECO:0000315"/>
    <property type="project" value="UniProtKB"/>
</dbReference>
<dbReference type="GO" id="GO:0007005">
    <property type="term" value="P:mitochondrion organization"/>
    <property type="evidence" value="ECO:0000315"/>
    <property type="project" value="FlyBase"/>
</dbReference>
<dbReference type="GO" id="GO:0016239">
    <property type="term" value="P:positive regulation of macroautophagy"/>
    <property type="evidence" value="ECO:0000315"/>
    <property type="project" value="FlyBase"/>
</dbReference>
<dbReference type="GO" id="GO:1901526">
    <property type="term" value="P:positive regulation of mitophagy"/>
    <property type="evidence" value="ECO:0000315"/>
    <property type="project" value="FlyBase"/>
</dbReference>
<dbReference type="InterPro" id="IPR019392">
    <property type="entry name" value="Miga"/>
</dbReference>
<dbReference type="PANTHER" id="PTHR21508">
    <property type="entry name" value="MITOGUARDIN"/>
    <property type="match status" value="1"/>
</dbReference>
<dbReference type="PANTHER" id="PTHR21508:SF5">
    <property type="entry name" value="MITOGUARDIN"/>
    <property type="match status" value="1"/>
</dbReference>
<dbReference type="Pfam" id="PF10265">
    <property type="entry name" value="Miga"/>
    <property type="match status" value="1"/>
</dbReference>
<feature type="chain" id="PRO_0000435630" description="Mitoguardin">
    <location>
        <begin position="1"/>
        <end position="525"/>
    </location>
</feature>
<feature type="transmembrane region" description="Helical" evidence="1">
    <location>
        <begin position="26"/>
        <end position="45"/>
    </location>
</feature>
<feature type="region of interest" description="Disordered" evidence="2">
    <location>
        <begin position="47"/>
        <end position="73"/>
    </location>
</feature>
<feature type="region of interest" description="Disordered" evidence="2">
    <location>
        <begin position="210"/>
        <end position="239"/>
    </location>
</feature>
<feature type="compositionally biased region" description="Basic residues" evidence="2">
    <location>
        <begin position="47"/>
        <end position="67"/>
    </location>
</feature>
<feature type="compositionally biased region" description="Acidic residues" evidence="2">
    <location>
        <begin position="211"/>
        <end position="220"/>
    </location>
</feature>
<feature type="mutagenesis site" description="In mitoguardian; progressive neurodegeneration in the eye caused by mitochondrial defects. Abolishes localization to the mitochondrion." evidence="3">
    <original>G</original>
    <variation>D</variation>
    <location>
        <position position="34"/>
    </location>
</feature>
<organism>
    <name type="scientific">Drosophila melanogaster</name>
    <name type="common">Fruit fly</name>
    <dbReference type="NCBI Taxonomy" id="7227"/>
    <lineage>
        <taxon>Eukaryota</taxon>
        <taxon>Metazoa</taxon>
        <taxon>Ecdysozoa</taxon>
        <taxon>Arthropoda</taxon>
        <taxon>Hexapoda</taxon>
        <taxon>Insecta</taxon>
        <taxon>Pterygota</taxon>
        <taxon>Neoptera</taxon>
        <taxon>Endopterygota</taxon>
        <taxon>Diptera</taxon>
        <taxon>Brachycera</taxon>
        <taxon>Muscomorpha</taxon>
        <taxon>Ephydroidea</taxon>
        <taxon>Drosophilidae</taxon>
        <taxon>Drosophila</taxon>
        <taxon>Sophophora</taxon>
    </lineage>
</organism>
<keyword id="KW-0472">Membrane</keyword>
<keyword id="KW-0496">Mitochondrion</keyword>
<keyword id="KW-1000">Mitochondrion outer membrane</keyword>
<keyword id="KW-1185">Reference proteome</keyword>
<keyword id="KW-0812">Transmembrane</keyword>
<keyword id="KW-1133">Transmembrane helix</keyword>
<comment type="function">
    <text evidence="3">Regulator of mitochondrial fusion required to maintain neuronal homeostasis.</text>
</comment>
<comment type="subunit">
    <text evidence="3">Interacts with zuc.</text>
</comment>
<comment type="interaction">
    <interactant intactId="EBI-184365">
        <id>Q9W3F7</id>
    </interactant>
    <interactant intactId="EBI-9943000">
        <id>Q9VKD7</id>
        <label>zuc</label>
    </interactant>
    <organismsDiffer>false</organismsDiffer>
    <experiments>2</experiments>
</comment>
<comment type="subcellular location">
    <subcellularLocation>
        <location evidence="6">Mitochondrion outer membrane</location>
        <topology evidence="1">Single-pass membrane protein</topology>
    </subcellularLocation>
</comment>
<comment type="similarity">
    <text evidence="5">Belongs to the mitoguardin family.</text>
</comment>
<comment type="sequence caution" evidence="5">
    <conflict type="frameshift">
        <sequence resource="EMBL-CDS" id="AAL28486"/>
    </conflict>
</comment>
<reference key="1">
    <citation type="journal article" date="2000" name="Science">
        <title>The genome sequence of Drosophila melanogaster.</title>
        <authorList>
            <person name="Adams M.D."/>
            <person name="Celniker S.E."/>
            <person name="Holt R.A."/>
            <person name="Evans C.A."/>
            <person name="Gocayne J.D."/>
            <person name="Amanatides P.G."/>
            <person name="Scherer S.E."/>
            <person name="Li P.W."/>
            <person name="Hoskins R.A."/>
            <person name="Galle R.F."/>
            <person name="George R.A."/>
            <person name="Lewis S.E."/>
            <person name="Richards S."/>
            <person name="Ashburner M."/>
            <person name="Henderson S.N."/>
            <person name="Sutton G.G."/>
            <person name="Wortman J.R."/>
            <person name="Yandell M.D."/>
            <person name="Zhang Q."/>
            <person name="Chen L.X."/>
            <person name="Brandon R.C."/>
            <person name="Rogers Y.-H.C."/>
            <person name="Blazej R.G."/>
            <person name="Champe M."/>
            <person name="Pfeiffer B.D."/>
            <person name="Wan K.H."/>
            <person name="Doyle C."/>
            <person name="Baxter E.G."/>
            <person name="Helt G."/>
            <person name="Nelson C.R."/>
            <person name="Miklos G.L.G."/>
            <person name="Abril J.F."/>
            <person name="Agbayani A."/>
            <person name="An H.-J."/>
            <person name="Andrews-Pfannkoch C."/>
            <person name="Baldwin D."/>
            <person name="Ballew R.M."/>
            <person name="Basu A."/>
            <person name="Baxendale J."/>
            <person name="Bayraktaroglu L."/>
            <person name="Beasley E.M."/>
            <person name="Beeson K.Y."/>
            <person name="Benos P.V."/>
            <person name="Berman B.P."/>
            <person name="Bhandari D."/>
            <person name="Bolshakov S."/>
            <person name="Borkova D."/>
            <person name="Botchan M.R."/>
            <person name="Bouck J."/>
            <person name="Brokstein P."/>
            <person name="Brottier P."/>
            <person name="Burtis K.C."/>
            <person name="Busam D.A."/>
            <person name="Butler H."/>
            <person name="Cadieu E."/>
            <person name="Center A."/>
            <person name="Chandra I."/>
            <person name="Cherry J.M."/>
            <person name="Cawley S."/>
            <person name="Dahlke C."/>
            <person name="Davenport L.B."/>
            <person name="Davies P."/>
            <person name="de Pablos B."/>
            <person name="Delcher A."/>
            <person name="Deng Z."/>
            <person name="Mays A.D."/>
            <person name="Dew I."/>
            <person name="Dietz S.M."/>
            <person name="Dodson K."/>
            <person name="Doup L.E."/>
            <person name="Downes M."/>
            <person name="Dugan-Rocha S."/>
            <person name="Dunkov B.C."/>
            <person name="Dunn P."/>
            <person name="Durbin K.J."/>
            <person name="Evangelista C.C."/>
            <person name="Ferraz C."/>
            <person name="Ferriera S."/>
            <person name="Fleischmann W."/>
            <person name="Fosler C."/>
            <person name="Gabrielian A.E."/>
            <person name="Garg N.S."/>
            <person name="Gelbart W.M."/>
            <person name="Glasser K."/>
            <person name="Glodek A."/>
            <person name="Gong F."/>
            <person name="Gorrell J.H."/>
            <person name="Gu Z."/>
            <person name="Guan P."/>
            <person name="Harris M."/>
            <person name="Harris N.L."/>
            <person name="Harvey D.A."/>
            <person name="Heiman T.J."/>
            <person name="Hernandez J.R."/>
            <person name="Houck J."/>
            <person name="Hostin D."/>
            <person name="Houston K.A."/>
            <person name="Howland T.J."/>
            <person name="Wei M.-H."/>
            <person name="Ibegwam C."/>
            <person name="Jalali M."/>
            <person name="Kalush F."/>
            <person name="Karpen G.H."/>
            <person name="Ke Z."/>
            <person name="Kennison J.A."/>
            <person name="Ketchum K.A."/>
            <person name="Kimmel B.E."/>
            <person name="Kodira C.D."/>
            <person name="Kraft C.L."/>
            <person name="Kravitz S."/>
            <person name="Kulp D."/>
            <person name="Lai Z."/>
            <person name="Lasko P."/>
            <person name="Lei Y."/>
            <person name="Levitsky A.A."/>
            <person name="Li J.H."/>
            <person name="Li Z."/>
            <person name="Liang Y."/>
            <person name="Lin X."/>
            <person name="Liu X."/>
            <person name="Mattei B."/>
            <person name="McIntosh T.C."/>
            <person name="McLeod M.P."/>
            <person name="McPherson D."/>
            <person name="Merkulov G."/>
            <person name="Milshina N.V."/>
            <person name="Mobarry C."/>
            <person name="Morris J."/>
            <person name="Moshrefi A."/>
            <person name="Mount S.M."/>
            <person name="Moy M."/>
            <person name="Murphy B."/>
            <person name="Murphy L."/>
            <person name="Muzny D.M."/>
            <person name="Nelson D.L."/>
            <person name="Nelson D.R."/>
            <person name="Nelson K.A."/>
            <person name="Nixon K."/>
            <person name="Nusskern D.R."/>
            <person name="Pacleb J.M."/>
            <person name="Palazzolo M."/>
            <person name="Pittman G.S."/>
            <person name="Pan S."/>
            <person name="Pollard J."/>
            <person name="Puri V."/>
            <person name="Reese M.G."/>
            <person name="Reinert K."/>
            <person name="Remington K."/>
            <person name="Saunders R.D.C."/>
            <person name="Scheeler F."/>
            <person name="Shen H."/>
            <person name="Shue B.C."/>
            <person name="Siden-Kiamos I."/>
            <person name="Simpson M."/>
            <person name="Skupski M.P."/>
            <person name="Smith T.J."/>
            <person name="Spier E."/>
            <person name="Spradling A.C."/>
            <person name="Stapleton M."/>
            <person name="Strong R."/>
            <person name="Sun E."/>
            <person name="Svirskas R."/>
            <person name="Tector C."/>
            <person name="Turner R."/>
            <person name="Venter E."/>
            <person name="Wang A.H."/>
            <person name="Wang X."/>
            <person name="Wang Z.-Y."/>
            <person name="Wassarman D.A."/>
            <person name="Weinstock G.M."/>
            <person name="Weissenbach J."/>
            <person name="Williams S.M."/>
            <person name="Woodage T."/>
            <person name="Worley K.C."/>
            <person name="Wu D."/>
            <person name="Yang S."/>
            <person name="Yao Q.A."/>
            <person name="Ye J."/>
            <person name="Yeh R.-F."/>
            <person name="Zaveri J.S."/>
            <person name="Zhan M."/>
            <person name="Zhang G."/>
            <person name="Zhao Q."/>
            <person name="Zheng L."/>
            <person name="Zheng X.H."/>
            <person name="Zhong F.N."/>
            <person name="Zhong W."/>
            <person name="Zhou X."/>
            <person name="Zhu S.C."/>
            <person name="Zhu X."/>
            <person name="Smith H.O."/>
            <person name="Gibbs R.A."/>
            <person name="Myers E.W."/>
            <person name="Rubin G.M."/>
            <person name="Venter J.C."/>
        </authorList>
    </citation>
    <scope>NUCLEOTIDE SEQUENCE [LARGE SCALE GENOMIC DNA]</scope>
    <source>
        <strain>Berkeley</strain>
    </source>
</reference>
<reference key="2">
    <citation type="journal article" date="2002" name="Genome Biol.">
        <title>Annotation of the Drosophila melanogaster euchromatic genome: a systematic review.</title>
        <authorList>
            <person name="Misra S."/>
            <person name="Crosby M.A."/>
            <person name="Mungall C.J."/>
            <person name="Matthews B.B."/>
            <person name="Campbell K.S."/>
            <person name="Hradecky P."/>
            <person name="Huang Y."/>
            <person name="Kaminker J.S."/>
            <person name="Millburn G.H."/>
            <person name="Prochnik S.E."/>
            <person name="Smith C.D."/>
            <person name="Tupy J.L."/>
            <person name="Whitfield E.J."/>
            <person name="Bayraktaroglu L."/>
            <person name="Berman B.P."/>
            <person name="Bettencourt B.R."/>
            <person name="Celniker S.E."/>
            <person name="de Grey A.D.N.J."/>
            <person name="Drysdale R.A."/>
            <person name="Harris N.L."/>
            <person name="Richter J."/>
            <person name="Russo S."/>
            <person name="Schroeder A.J."/>
            <person name="Shu S.Q."/>
            <person name="Stapleton M."/>
            <person name="Yamada C."/>
            <person name="Ashburner M."/>
            <person name="Gelbart W.M."/>
            <person name="Rubin G.M."/>
            <person name="Lewis S.E."/>
        </authorList>
    </citation>
    <scope>GENOME REANNOTATION</scope>
    <source>
        <strain>Berkeley</strain>
    </source>
</reference>
<reference key="3">
    <citation type="journal article" date="2002" name="Genome Biol.">
        <title>A Drosophila full-length cDNA resource.</title>
        <authorList>
            <person name="Stapleton M."/>
            <person name="Carlson J.W."/>
            <person name="Brokstein P."/>
            <person name="Yu C."/>
            <person name="Champe M."/>
            <person name="George R.A."/>
            <person name="Guarin H."/>
            <person name="Kronmiller B."/>
            <person name="Pacleb J.M."/>
            <person name="Park S."/>
            <person name="Wan K.H."/>
            <person name="Rubin G.M."/>
            <person name="Celniker S.E."/>
        </authorList>
    </citation>
    <scope>NUCLEOTIDE SEQUENCE [LARGE SCALE MRNA]</scope>
    <source>
        <strain>Berkeley</strain>
        <tissue>Embryo</tissue>
    </source>
</reference>
<reference key="4">
    <citation type="submission" date="2009-01" db="EMBL/GenBank/DDBJ databases">
        <authorList>
            <person name="Carlson J."/>
            <person name="Booth B."/>
            <person name="Frise E."/>
            <person name="Park S."/>
            <person name="Wan K."/>
            <person name="Yu C."/>
            <person name="Celniker S."/>
        </authorList>
    </citation>
    <scope>NUCLEOTIDE SEQUENCE [LARGE SCALE MRNA]</scope>
</reference>
<reference key="5">
    <citation type="journal article" date="2016" name="Mol. Cell">
        <title>Mitoguardin regulates mitochondrial fusion through MitoPLD and is required for neuronal homeostasis.</title>
        <authorList>
            <person name="Zhang Y."/>
            <person name="Liu X."/>
            <person name="Bai J."/>
            <person name="Tian X."/>
            <person name="Zhao X."/>
            <person name="Liu W."/>
            <person name="Duan X."/>
            <person name="Shang W."/>
            <person name="Fan H.Y."/>
            <person name="Tong C."/>
        </authorList>
    </citation>
    <scope>FUNCTION</scope>
    <scope>SUBCELLULAR LOCATION</scope>
    <scope>INTERACTION WITH ZUC</scope>
    <scope>MUTAGENESIS OF GLY-34</scope>
</reference>
<gene>
    <name evidence="4 7" type="primary">Miga</name>
    <name evidence="7" type="ORF">CG12125</name>
</gene>
<name>MIGA_DROME</name>
<proteinExistence type="evidence at protein level"/>